<accession>Q62K46</accession>
<evidence type="ECO:0000255" key="1">
    <source>
        <dbReference type="HAMAP-Rule" id="MF_00689"/>
    </source>
</evidence>
<gene>
    <name evidence="1" type="primary">bpt</name>
    <name type="ordered locus">BMA1252</name>
</gene>
<proteinExistence type="inferred from homology"/>
<comment type="function">
    <text evidence="1">Functions in the N-end rule pathway of protein degradation where it conjugates Leu from its aminoacyl-tRNA to the N-termini of proteins containing an N-terminal aspartate or glutamate.</text>
</comment>
<comment type="catalytic activity">
    <reaction evidence="1">
        <text>N-terminal L-glutamyl-[protein] + L-leucyl-tRNA(Leu) = N-terminal L-leucyl-L-glutamyl-[protein] + tRNA(Leu) + H(+)</text>
        <dbReference type="Rhea" id="RHEA:50412"/>
        <dbReference type="Rhea" id="RHEA-COMP:9613"/>
        <dbReference type="Rhea" id="RHEA-COMP:9622"/>
        <dbReference type="Rhea" id="RHEA-COMP:12664"/>
        <dbReference type="Rhea" id="RHEA-COMP:12668"/>
        <dbReference type="ChEBI" id="CHEBI:15378"/>
        <dbReference type="ChEBI" id="CHEBI:64721"/>
        <dbReference type="ChEBI" id="CHEBI:78442"/>
        <dbReference type="ChEBI" id="CHEBI:78494"/>
        <dbReference type="ChEBI" id="CHEBI:133041"/>
        <dbReference type="EC" id="2.3.2.29"/>
    </reaction>
</comment>
<comment type="catalytic activity">
    <reaction evidence="1">
        <text>N-terminal L-aspartyl-[protein] + L-leucyl-tRNA(Leu) = N-terminal L-leucyl-L-aspartyl-[protein] + tRNA(Leu) + H(+)</text>
        <dbReference type="Rhea" id="RHEA:50420"/>
        <dbReference type="Rhea" id="RHEA-COMP:9613"/>
        <dbReference type="Rhea" id="RHEA-COMP:9622"/>
        <dbReference type="Rhea" id="RHEA-COMP:12669"/>
        <dbReference type="Rhea" id="RHEA-COMP:12674"/>
        <dbReference type="ChEBI" id="CHEBI:15378"/>
        <dbReference type="ChEBI" id="CHEBI:64720"/>
        <dbReference type="ChEBI" id="CHEBI:78442"/>
        <dbReference type="ChEBI" id="CHEBI:78494"/>
        <dbReference type="ChEBI" id="CHEBI:133042"/>
        <dbReference type="EC" id="2.3.2.29"/>
    </reaction>
</comment>
<comment type="subcellular location">
    <subcellularLocation>
        <location evidence="1">Cytoplasm</location>
    </subcellularLocation>
</comment>
<comment type="similarity">
    <text evidence="1">Belongs to the R-transferase family. Bpt subfamily.</text>
</comment>
<dbReference type="EC" id="2.3.2.29" evidence="1"/>
<dbReference type="EMBL" id="CP000010">
    <property type="protein sequence ID" value="AAU47478.1"/>
    <property type="molecule type" value="Genomic_DNA"/>
</dbReference>
<dbReference type="RefSeq" id="WP_004192823.1">
    <property type="nucleotide sequence ID" value="NC_006348.1"/>
</dbReference>
<dbReference type="RefSeq" id="YP_102923.1">
    <property type="nucleotide sequence ID" value="NC_006348.1"/>
</dbReference>
<dbReference type="SMR" id="Q62K46"/>
<dbReference type="KEGG" id="bma:BMA1252"/>
<dbReference type="PATRIC" id="fig|243160.12.peg.1283"/>
<dbReference type="eggNOG" id="COG2935">
    <property type="taxonomic scope" value="Bacteria"/>
</dbReference>
<dbReference type="HOGENOM" id="CLU_077607_0_0_4"/>
<dbReference type="Proteomes" id="UP000006693">
    <property type="component" value="Chromosome 1"/>
</dbReference>
<dbReference type="GO" id="GO:0005737">
    <property type="term" value="C:cytoplasm"/>
    <property type="evidence" value="ECO:0007669"/>
    <property type="project" value="UniProtKB-SubCell"/>
</dbReference>
<dbReference type="GO" id="GO:0004057">
    <property type="term" value="F:arginyl-tRNA--protein transferase activity"/>
    <property type="evidence" value="ECO:0007669"/>
    <property type="project" value="InterPro"/>
</dbReference>
<dbReference type="GO" id="GO:0008914">
    <property type="term" value="F:leucyl-tRNA--protein transferase activity"/>
    <property type="evidence" value="ECO:0007669"/>
    <property type="project" value="UniProtKB-UniRule"/>
</dbReference>
<dbReference type="GO" id="GO:0071596">
    <property type="term" value="P:ubiquitin-dependent protein catabolic process via the N-end rule pathway"/>
    <property type="evidence" value="ECO:0007669"/>
    <property type="project" value="InterPro"/>
</dbReference>
<dbReference type="HAMAP" id="MF_00689">
    <property type="entry name" value="Bpt"/>
    <property type="match status" value="1"/>
</dbReference>
<dbReference type="InterPro" id="IPR016181">
    <property type="entry name" value="Acyl_CoA_acyltransferase"/>
</dbReference>
<dbReference type="InterPro" id="IPR017138">
    <property type="entry name" value="Asp_Glu_LeuTrfase"/>
</dbReference>
<dbReference type="InterPro" id="IPR030700">
    <property type="entry name" value="N-end_Aminoacyl_Trfase"/>
</dbReference>
<dbReference type="InterPro" id="IPR007472">
    <property type="entry name" value="N-end_Aminoacyl_Trfase_C"/>
</dbReference>
<dbReference type="InterPro" id="IPR007471">
    <property type="entry name" value="N-end_Aminoacyl_Trfase_N"/>
</dbReference>
<dbReference type="NCBIfam" id="NF002341">
    <property type="entry name" value="PRK01305.1-1"/>
    <property type="match status" value="1"/>
</dbReference>
<dbReference type="NCBIfam" id="NF002342">
    <property type="entry name" value="PRK01305.1-3"/>
    <property type="match status" value="1"/>
</dbReference>
<dbReference type="NCBIfam" id="NF002346">
    <property type="entry name" value="PRK01305.2-3"/>
    <property type="match status" value="1"/>
</dbReference>
<dbReference type="PANTHER" id="PTHR21367">
    <property type="entry name" value="ARGININE-TRNA-PROTEIN TRANSFERASE 1"/>
    <property type="match status" value="1"/>
</dbReference>
<dbReference type="PANTHER" id="PTHR21367:SF1">
    <property type="entry name" value="ARGINYL-TRNA--PROTEIN TRANSFERASE 1"/>
    <property type="match status" value="1"/>
</dbReference>
<dbReference type="Pfam" id="PF04377">
    <property type="entry name" value="ATE_C"/>
    <property type="match status" value="1"/>
</dbReference>
<dbReference type="Pfam" id="PF04376">
    <property type="entry name" value="ATE_N"/>
    <property type="match status" value="1"/>
</dbReference>
<dbReference type="PIRSF" id="PIRSF037208">
    <property type="entry name" value="ATE_pro_prd"/>
    <property type="match status" value="1"/>
</dbReference>
<dbReference type="SUPFAM" id="SSF55729">
    <property type="entry name" value="Acyl-CoA N-acyltransferases (Nat)"/>
    <property type="match status" value="1"/>
</dbReference>
<sequence length="276" mass="31209">MTHPTELPLSPLSALQFYATAPYPCSYLDGRVARSQVATPSHLINSDIYTELVKAGFRRSGVFTYRPYCDGCRACVPVRVPVDAFAPNRTQRRTWKRHRALVATVAALHYDEEHYALYMRYQSARHAGGGMDRDSRDQYEQFLLQSRINSRLVEFRDLDPAENGASTLRMVSMIDILGDGLSSVYTFFDPDESHASYGTYNILWQIEQAKSLRLPYVYLGYWIRESPKMAYKANFHPLEGLVDGRWKVLDPTLADLPPVDAALARAPLPGGHSGTR</sequence>
<reference key="1">
    <citation type="journal article" date="2004" name="Proc. Natl. Acad. Sci. U.S.A.">
        <title>Structural flexibility in the Burkholderia mallei genome.</title>
        <authorList>
            <person name="Nierman W.C."/>
            <person name="DeShazer D."/>
            <person name="Kim H.S."/>
            <person name="Tettelin H."/>
            <person name="Nelson K.E."/>
            <person name="Feldblyum T.V."/>
            <person name="Ulrich R.L."/>
            <person name="Ronning C.M."/>
            <person name="Brinkac L.M."/>
            <person name="Daugherty S.C."/>
            <person name="Davidsen T.D."/>
            <person name="DeBoy R.T."/>
            <person name="Dimitrov G."/>
            <person name="Dodson R.J."/>
            <person name="Durkin A.S."/>
            <person name="Gwinn M.L."/>
            <person name="Haft D.H."/>
            <person name="Khouri H.M."/>
            <person name="Kolonay J.F."/>
            <person name="Madupu R."/>
            <person name="Mohammoud Y."/>
            <person name="Nelson W.C."/>
            <person name="Radune D."/>
            <person name="Romero C.M."/>
            <person name="Sarria S."/>
            <person name="Selengut J."/>
            <person name="Shamblin C."/>
            <person name="Sullivan S.A."/>
            <person name="White O."/>
            <person name="Yu Y."/>
            <person name="Zafar N."/>
            <person name="Zhou L."/>
            <person name="Fraser C.M."/>
        </authorList>
    </citation>
    <scope>NUCLEOTIDE SEQUENCE [LARGE SCALE GENOMIC DNA]</scope>
    <source>
        <strain>ATCC 23344</strain>
    </source>
</reference>
<feature type="chain" id="PRO_0000263175" description="Aspartate/glutamate leucyltransferase">
    <location>
        <begin position="1"/>
        <end position="276"/>
    </location>
</feature>
<name>BPT_BURMA</name>
<organism>
    <name type="scientific">Burkholderia mallei (strain ATCC 23344)</name>
    <dbReference type="NCBI Taxonomy" id="243160"/>
    <lineage>
        <taxon>Bacteria</taxon>
        <taxon>Pseudomonadati</taxon>
        <taxon>Pseudomonadota</taxon>
        <taxon>Betaproteobacteria</taxon>
        <taxon>Burkholderiales</taxon>
        <taxon>Burkholderiaceae</taxon>
        <taxon>Burkholderia</taxon>
        <taxon>pseudomallei group</taxon>
    </lineage>
</organism>
<keyword id="KW-0012">Acyltransferase</keyword>
<keyword id="KW-0963">Cytoplasm</keyword>
<keyword id="KW-1185">Reference proteome</keyword>
<keyword id="KW-0808">Transferase</keyword>
<protein>
    <recommendedName>
        <fullName evidence="1">Aspartate/glutamate leucyltransferase</fullName>
        <ecNumber evidence="1">2.3.2.29</ecNumber>
    </recommendedName>
</protein>